<evidence type="ECO:0000255" key="1">
    <source>
        <dbReference type="HAMAP-Rule" id="MF_01307"/>
    </source>
</evidence>
<evidence type="ECO:0000305" key="2"/>
<comment type="function">
    <text evidence="1">With S4 and S12 plays an important role in translational accuracy.</text>
</comment>
<comment type="function">
    <text evidence="1">Located at the back of the 30S subunit body where it stabilizes the conformation of the head with respect to the body.</text>
</comment>
<comment type="subunit">
    <text evidence="1">Part of the 30S ribosomal subunit. Contacts proteins S4 and S8.</text>
</comment>
<comment type="domain">
    <text>The N-terminal domain interacts with the head of the 30S subunit; the C-terminal domain interacts with the body and contacts protein S4. The interaction surface between S4 and S5 is involved in control of translational fidelity.</text>
</comment>
<comment type="similarity">
    <text evidence="1">Belongs to the universal ribosomal protein uS5 family.</text>
</comment>
<keyword id="KW-1185">Reference proteome</keyword>
<keyword id="KW-0687">Ribonucleoprotein</keyword>
<keyword id="KW-0689">Ribosomal protein</keyword>
<keyword id="KW-0694">RNA-binding</keyword>
<keyword id="KW-0699">rRNA-binding</keyword>
<accession>Q8R7X1</accession>
<dbReference type="EMBL" id="AE008691">
    <property type="protein sequence ID" value="AAM25418.1"/>
    <property type="molecule type" value="Genomic_DNA"/>
</dbReference>
<dbReference type="RefSeq" id="WP_011026321.1">
    <property type="nucleotide sequence ID" value="NZ_JANUCV010000001.1"/>
</dbReference>
<dbReference type="SMR" id="Q8R7X1"/>
<dbReference type="STRING" id="273068.TTE2274"/>
<dbReference type="KEGG" id="tte:TTE2274"/>
<dbReference type="eggNOG" id="COG0098">
    <property type="taxonomic scope" value="Bacteria"/>
</dbReference>
<dbReference type="HOGENOM" id="CLU_065898_2_2_9"/>
<dbReference type="OrthoDB" id="9809045at2"/>
<dbReference type="Proteomes" id="UP000000555">
    <property type="component" value="Chromosome"/>
</dbReference>
<dbReference type="GO" id="GO:0015935">
    <property type="term" value="C:small ribosomal subunit"/>
    <property type="evidence" value="ECO:0007669"/>
    <property type="project" value="InterPro"/>
</dbReference>
<dbReference type="GO" id="GO:0019843">
    <property type="term" value="F:rRNA binding"/>
    <property type="evidence" value="ECO:0007669"/>
    <property type="project" value="UniProtKB-UniRule"/>
</dbReference>
<dbReference type="GO" id="GO:0003735">
    <property type="term" value="F:structural constituent of ribosome"/>
    <property type="evidence" value="ECO:0007669"/>
    <property type="project" value="InterPro"/>
</dbReference>
<dbReference type="GO" id="GO:0006412">
    <property type="term" value="P:translation"/>
    <property type="evidence" value="ECO:0007669"/>
    <property type="project" value="UniProtKB-UniRule"/>
</dbReference>
<dbReference type="FunFam" id="3.30.160.20:FF:000001">
    <property type="entry name" value="30S ribosomal protein S5"/>
    <property type="match status" value="1"/>
</dbReference>
<dbReference type="FunFam" id="3.30.230.10:FF:000002">
    <property type="entry name" value="30S ribosomal protein S5"/>
    <property type="match status" value="1"/>
</dbReference>
<dbReference type="Gene3D" id="3.30.160.20">
    <property type="match status" value="1"/>
</dbReference>
<dbReference type="Gene3D" id="3.30.230.10">
    <property type="match status" value="1"/>
</dbReference>
<dbReference type="HAMAP" id="MF_01307_B">
    <property type="entry name" value="Ribosomal_uS5_B"/>
    <property type="match status" value="1"/>
</dbReference>
<dbReference type="InterPro" id="IPR020568">
    <property type="entry name" value="Ribosomal_Su5_D2-typ_SF"/>
</dbReference>
<dbReference type="InterPro" id="IPR000851">
    <property type="entry name" value="Ribosomal_uS5"/>
</dbReference>
<dbReference type="InterPro" id="IPR005712">
    <property type="entry name" value="Ribosomal_uS5_bac-type"/>
</dbReference>
<dbReference type="InterPro" id="IPR005324">
    <property type="entry name" value="Ribosomal_uS5_C"/>
</dbReference>
<dbReference type="InterPro" id="IPR013810">
    <property type="entry name" value="Ribosomal_uS5_N"/>
</dbReference>
<dbReference type="InterPro" id="IPR018192">
    <property type="entry name" value="Ribosomal_uS5_N_CS"/>
</dbReference>
<dbReference type="InterPro" id="IPR014721">
    <property type="entry name" value="Ribsml_uS5_D2-typ_fold_subgr"/>
</dbReference>
<dbReference type="NCBIfam" id="TIGR01021">
    <property type="entry name" value="rpsE_bact"/>
    <property type="match status" value="1"/>
</dbReference>
<dbReference type="PANTHER" id="PTHR48277">
    <property type="entry name" value="MITOCHONDRIAL RIBOSOMAL PROTEIN S5"/>
    <property type="match status" value="1"/>
</dbReference>
<dbReference type="PANTHER" id="PTHR48277:SF1">
    <property type="entry name" value="MITOCHONDRIAL RIBOSOMAL PROTEIN S5"/>
    <property type="match status" value="1"/>
</dbReference>
<dbReference type="Pfam" id="PF00333">
    <property type="entry name" value="Ribosomal_S5"/>
    <property type="match status" value="1"/>
</dbReference>
<dbReference type="Pfam" id="PF03719">
    <property type="entry name" value="Ribosomal_S5_C"/>
    <property type="match status" value="1"/>
</dbReference>
<dbReference type="SUPFAM" id="SSF54768">
    <property type="entry name" value="dsRNA-binding domain-like"/>
    <property type="match status" value="1"/>
</dbReference>
<dbReference type="SUPFAM" id="SSF54211">
    <property type="entry name" value="Ribosomal protein S5 domain 2-like"/>
    <property type="match status" value="1"/>
</dbReference>
<dbReference type="PROSITE" id="PS00585">
    <property type="entry name" value="RIBOSOMAL_S5"/>
    <property type="match status" value="1"/>
</dbReference>
<dbReference type="PROSITE" id="PS50881">
    <property type="entry name" value="S5_DSRBD"/>
    <property type="match status" value="1"/>
</dbReference>
<gene>
    <name evidence="1" type="primary">rpsE</name>
    <name type="ordered locus">TTE2274</name>
</gene>
<name>RS5_CALS4</name>
<sequence length="167" mass="17845">MARVDWTKLNLKERVVSINRVSKVVKGGKNFRFSVTVVVGDPDKGYVGVGRGKAAEIPDAIRKAIEDAKKHLIKVPVVGTTIPHEVIGEFGAGKVLLKPAREGTGVIAGGPVRAVLESAGIRDVLSKSLGSSNATNMVYATIEGLKRLKTAEEVARLRGIPVHQLFE</sequence>
<reference key="1">
    <citation type="journal article" date="2002" name="Genome Res.">
        <title>A complete sequence of the T. tengcongensis genome.</title>
        <authorList>
            <person name="Bao Q."/>
            <person name="Tian Y."/>
            <person name="Li W."/>
            <person name="Xu Z."/>
            <person name="Xuan Z."/>
            <person name="Hu S."/>
            <person name="Dong W."/>
            <person name="Yang J."/>
            <person name="Chen Y."/>
            <person name="Xue Y."/>
            <person name="Xu Y."/>
            <person name="Lai X."/>
            <person name="Huang L."/>
            <person name="Dong X."/>
            <person name="Ma Y."/>
            <person name="Ling L."/>
            <person name="Tan H."/>
            <person name="Chen R."/>
            <person name="Wang J."/>
            <person name="Yu J."/>
            <person name="Yang H."/>
        </authorList>
    </citation>
    <scope>NUCLEOTIDE SEQUENCE [LARGE SCALE GENOMIC DNA]</scope>
    <source>
        <strain>DSM 15242 / JCM 11007 / NBRC 100824 / MB4</strain>
    </source>
</reference>
<protein>
    <recommendedName>
        <fullName evidence="1">Small ribosomal subunit protein uS5</fullName>
    </recommendedName>
    <alternativeName>
        <fullName evidence="2">30S ribosomal protein S5</fullName>
    </alternativeName>
</protein>
<feature type="chain" id="PRO_0000131623" description="Small ribosomal subunit protein uS5">
    <location>
        <begin position="1"/>
        <end position="167"/>
    </location>
</feature>
<feature type="domain" description="S5 DRBM" evidence="1">
    <location>
        <begin position="11"/>
        <end position="75"/>
    </location>
</feature>
<organism>
    <name type="scientific">Caldanaerobacter subterraneus subsp. tengcongensis (strain DSM 15242 / JCM 11007 / NBRC 100824 / MB4)</name>
    <name type="common">Thermoanaerobacter tengcongensis</name>
    <dbReference type="NCBI Taxonomy" id="273068"/>
    <lineage>
        <taxon>Bacteria</taxon>
        <taxon>Bacillati</taxon>
        <taxon>Bacillota</taxon>
        <taxon>Clostridia</taxon>
        <taxon>Thermoanaerobacterales</taxon>
        <taxon>Thermoanaerobacteraceae</taxon>
        <taxon>Caldanaerobacter</taxon>
    </lineage>
</organism>
<proteinExistence type="inferred from homology"/>